<dbReference type="EMBL" id="CP000051">
    <property type="protein sequence ID" value="AAX50798.1"/>
    <property type="molecule type" value="Genomic_DNA"/>
</dbReference>
<dbReference type="RefSeq" id="WP_010725239.1">
    <property type="nucleotide sequence ID" value="NC_007429.1"/>
</dbReference>
<dbReference type="SMR" id="Q3KLH4"/>
<dbReference type="KEGG" id="cta:CTA_0572"/>
<dbReference type="HOGENOM" id="CLU_083987_3_3_0"/>
<dbReference type="Proteomes" id="UP000002532">
    <property type="component" value="Chromosome"/>
</dbReference>
<dbReference type="GO" id="GO:0022625">
    <property type="term" value="C:cytosolic large ribosomal subunit"/>
    <property type="evidence" value="ECO:0007669"/>
    <property type="project" value="TreeGrafter"/>
</dbReference>
<dbReference type="GO" id="GO:0019843">
    <property type="term" value="F:rRNA binding"/>
    <property type="evidence" value="ECO:0007669"/>
    <property type="project" value="UniProtKB-UniRule"/>
</dbReference>
<dbReference type="GO" id="GO:0003735">
    <property type="term" value="F:structural constituent of ribosome"/>
    <property type="evidence" value="ECO:0007669"/>
    <property type="project" value="InterPro"/>
</dbReference>
<dbReference type="GO" id="GO:0006412">
    <property type="term" value="P:translation"/>
    <property type="evidence" value="ECO:0007669"/>
    <property type="project" value="UniProtKB-UniRule"/>
</dbReference>
<dbReference type="FunFam" id="3.90.470.10:FF:000025">
    <property type="entry name" value="50S ribosomal protein L22"/>
    <property type="match status" value="1"/>
</dbReference>
<dbReference type="Gene3D" id="3.90.470.10">
    <property type="entry name" value="Ribosomal protein L22/L17"/>
    <property type="match status" value="1"/>
</dbReference>
<dbReference type="HAMAP" id="MF_01331_B">
    <property type="entry name" value="Ribosomal_uL22_B"/>
    <property type="match status" value="1"/>
</dbReference>
<dbReference type="InterPro" id="IPR001063">
    <property type="entry name" value="Ribosomal_uL22"/>
</dbReference>
<dbReference type="InterPro" id="IPR005727">
    <property type="entry name" value="Ribosomal_uL22_bac/chlpt-type"/>
</dbReference>
<dbReference type="InterPro" id="IPR047867">
    <property type="entry name" value="Ribosomal_uL22_bac/org-type"/>
</dbReference>
<dbReference type="InterPro" id="IPR036394">
    <property type="entry name" value="Ribosomal_uL22_sf"/>
</dbReference>
<dbReference type="NCBIfam" id="TIGR01044">
    <property type="entry name" value="rplV_bact"/>
    <property type="match status" value="1"/>
</dbReference>
<dbReference type="PANTHER" id="PTHR13501">
    <property type="entry name" value="CHLOROPLAST 50S RIBOSOMAL PROTEIN L22-RELATED"/>
    <property type="match status" value="1"/>
</dbReference>
<dbReference type="PANTHER" id="PTHR13501:SF8">
    <property type="entry name" value="LARGE RIBOSOMAL SUBUNIT PROTEIN UL22M"/>
    <property type="match status" value="1"/>
</dbReference>
<dbReference type="Pfam" id="PF00237">
    <property type="entry name" value="Ribosomal_L22"/>
    <property type="match status" value="1"/>
</dbReference>
<dbReference type="SUPFAM" id="SSF54843">
    <property type="entry name" value="Ribosomal protein L22"/>
    <property type="match status" value="1"/>
</dbReference>
<feature type="chain" id="PRO_0000243137" description="Large ribosomal subunit protein uL22">
    <location>
        <begin position="1"/>
        <end position="111"/>
    </location>
</feature>
<reference key="1">
    <citation type="journal article" date="2005" name="Infect. Immun.">
        <title>Comparative genomic analysis of Chlamydia trachomatis oculotropic and genitotropic strains.</title>
        <authorList>
            <person name="Carlson J.H."/>
            <person name="Porcella S.F."/>
            <person name="McClarty G."/>
            <person name="Caldwell H.D."/>
        </authorList>
    </citation>
    <scope>NUCLEOTIDE SEQUENCE [LARGE SCALE GENOMIC DNA]</scope>
    <source>
        <strain>ATCC VR-571B / DSM 19440 / HAR-13</strain>
    </source>
</reference>
<organism>
    <name type="scientific">Chlamydia trachomatis serovar A (strain ATCC VR-571B / DSM 19440 / HAR-13)</name>
    <dbReference type="NCBI Taxonomy" id="315277"/>
    <lineage>
        <taxon>Bacteria</taxon>
        <taxon>Pseudomonadati</taxon>
        <taxon>Chlamydiota</taxon>
        <taxon>Chlamydiia</taxon>
        <taxon>Chlamydiales</taxon>
        <taxon>Chlamydiaceae</taxon>
        <taxon>Chlamydia/Chlamydophila group</taxon>
        <taxon>Chlamydia</taxon>
    </lineage>
</organism>
<evidence type="ECO:0000255" key="1">
    <source>
        <dbReference type="HAMAP-Rule" id="MF_01331"/>
    </source>
</evidence>
<evidence type="ECO:0000305" key="2"/>
<protein>
    <recommendedName>
        <fullName evidence="1">Large ribosomal subunit protein uL22</fullName>
    </recommendedName>
    <alternativeName>
        <fullName evidence="2">50S ribosomal protein L22</fullName>
    </alternativeName>
</protein>
<name>RL22_CHLTA</name>
<accession>Q3KLH4</accession>
<keyword id="KW-0687">Ribonucleoprotein</keyword>
<keyword id="KW-0689">Ribosomal protein</keyword>
<keyword id="KW-0694">RNA-binding</keyword>
<keyword id="KW-0699">rRNA-binding</keyword>
<comment type="function">
    <text evidence="1">This protein binds specifically to 23S rRNA; its binding is stimulated by other ribosomal proteins, e.g. L4, L17, and L20. It is important during the early stages of 50S assembly. It makes multiple contacts with different domains of the 23S rRNA in the assembled 50S subunit and ribosome (By similarity).</text>
</comment>
<comment type="function">
    <text evidence="1">The globular domain of the protein is located near the polypeptide exit tunnel on the outside of the subunit, while an extended beta-hairpin is found that lines the wall of the exit tunnel in the center of the 70S ribosome.</text>
</comment>
<comment type="subunit">
    <text evidence="1">Part of the 50S ribosomal subunit.</text>
</comment>
<comment type="similarity">
    <text evidence="1">Belongs to the universal ribosomal protein uL22 family.</text>
</comment>
<proteinExistence type="inferred from homology"/>
<gene>
    <name evidence="1" type="primary">rplV</name>
    <name type="ordered locus">CTA_0572</name>
</gene>
<sequence length="111" mass="12453">MFKATARYIRVQPRKARLAAGLMRNRSVVEAQQQLSFSQMKAGRCLKKVLDGAIANAESNENIKRENLCVLEVRVDVGPMFKRMKSKSRGGRAPILKRTSHLTVIVGERGQ</sequence>